<gene>
    <name evidence="1" type="primary">lon</name>
    <name type="ordered locus">FN2014</name>
</gene>
<comment type="function">
    <text evidence="1">ATP-dependent serine protease that mediates the selective degradation of mutant and abnormal proteins as well as certain short-lived regulatory proteins. Required for cellular homeostasis and for survival from DNA damage and developmental changes induced by stress. Degrades polypeptides processively to yield small peptide fragments that are 5 to 10 amino acids long. Binds to DNA in a double-stranded, site-specific manner.</text>
</comment>
<comment type="catalytic activity">
    <reaction evidence="1">
        <text>Hydrolysis of proteins in presence of ATP.</text>
        <dbReference type="EC" id="3.4.21.53"/>
    </reaction>
</comment>
<comment type="subunit">
    <text evidence="1">Homohexamer. Organized in a ring with a central cavity.</text>
</comment>
<comment type="subcellular location">
    <subcellularLocation>
        <location evidence="1">Cytoplasm</location>
    </subcellularLocation>
</comment>
<comment type="induction">
    <text evidence="1">By heat shock.</text>
</comment>
<comment type="similarity">
    <text evidence="1">Belongs to the peptidase S16 family.</text>
</comment>
<sequence>MLKAPFLPIRDLVIFPNVVTPIYVGRANSIATLEKAIANKTKLVLGLQKDASQENPTFDGDIYEVGVIANIVQIIRMPNNNIKVLVEAEDRVKIKNIEKEENEYVTTYTVIKETLKDSKETEAIYRKVFTRFEKYVSMIGKFSSELILNLKKIEDYSNGLDIMASNLNISSEKKQEILEISNVRDRGYRILDEIVAEMEIASLEKTIDDKVKNKMNEAQRAYYLKEKISVMKEELGDFSQDDDVIEIVDRLKNTELPKEVREKLEAEVKKLTKMQPFSAESSVIRNYIEAVLELPWNSETNDVLDLKKASQILERDHYGLKDAKEKVLDYLAVKKLNPSMNGVILCLSGPPGIGKTSLVKSIAESMGRKFVRVSLGGVRDEAEIRGHRRTYVGSMPGKIMKAMKEAGTNNPVMLLDEIDKMSNDFKGDPASAMLEVLDPEQNKNFEDHYIDMPFDLSKVFFVATANDLRNVSAPLRDRMDILQLSSYTEFEKLHIAQKFLLKQAQKENGLANIDIKIPDKVMFKLIDEYTREAGVRNLKREIITICRKLAREVVEKDTKKFNLKPTDLEKYLGKAKFRPEKSRKATGKIGVVNGLAWTAVGGVTLDVQGVDTPGKGEVTLTGTLGNVMKESASVAMTYVKANLKKYPPKDKDFFKDRTIHLHFPEGATPKDGPSAGITITTAIVSVLTNKKVRQDIAMTGEITITGDVLAIGGVREKVIGAHRAGIKEVILPEDNRVDTDEIPDELKSTMKIHFAKTYDDVSKLVFVK</sequence>
<name>LON_FUSNN</name>
<evidence type="ECO:0000255" key="1">
    <source>
        <dbReference type="HAMAP-Rule" id="MF_01973"/>
    </source>
</evidence>
<evidence type="ECO:0000255" key="2">
    <source>
        <dbReference type="PROSITE-ProRule" id="PRU01122"/>
    </source>
</evidence>
<evidence type="ECO:0000255" key="3">
    <source>
        <dbReference type="PROSITE-ProRule" id="PRU01123"/>
    </source>
</evidence>
<feature type="chain" id="PRO_0000396568" description="Lon protease">
    <location>
        <begin position="1"/>
        <end position="768"/>
    </location>
</feature>
<feature type="domain" description="Lon N-terminal" evidence="3">
    <location>
        <begin position="4"/>
        <end position="198"/>
    </location>
</feature>
<feature type="domain" description="Lon proteolytic" evidence="2">
    <location>
        <begin position="586"/>
        <end position="768"/>
    </location>
</feature>
<feature type="active site" evidence="1">
    <location>
        <position position="674"/>
    </location>
</feature>
<feature type="active site" evidence="1">
    <location>
        <position position="717"/>
    </location>
</feature>
<feature type="binding site" evidence="1">
    <location>
        <begin position="349"/>
        <end position="356"/>
    </location>
    <ligand>
        <name>ATP</name>
        <dbReference type="ChEBI" id="CHEBI:30616"/>
    </ligand>
</feature>
<dbReference type="EC" id="3.4.21.53" evidence="1"/>
<dbReference type="EMBL" id="AE009951">
    <property type="protein sequence ID" value="AAL94104.1"/>
    <property type="molecule type" value="Genomic_DNA"/>
</dbReference>
<dbReference type="RefSeq" id="NP_602805.1">
    <property type="nucleotide sequence ID" value="NC_003454.1"/>
</dbReference>
<dbReference type="RefSeq" id="WP_011015983.1">
    <property type="nucleotide sequence ID" value="NZ_CP028101.1"/>
</dbReference>
<dbReference type="SMR" id="Q8RHK0"/>
<dbReference type="FunCoup" id="Q8RHK0">
    <property type="interactions" value="328"/>
</dbReference>
<dbReference type="STRING" id="190304.FN2014"/>
<dbReference type="MEROPS" id="S16.009"/>
<dbReference type="PaxDb" id="190304-FN2014"/>
<dbReference type="EnsemblBacteria" id="AAL94104">
    <property type="protein sequence ID" value="AAL94104"/>
    <property type="gene ID" value="FN2014"/>
</dbReference>
<dbReference type="GeneID" id="79782979"/>
<dbReference type="KEGG" id="fnu:FN2014"/>
<dbReference type="PATRIC" id="fig|190304.8.peg.482"/>
<dbReference type="eggNOG" id="COG0466">
    <property type="taxonomic scope" value="Bacteria"/>
</dbReference>
<dbReference type="HOGENOM" id="CLU_004109_4_3_0"/>
<dbReference type="InParanoid" id="Q8RHK0"/>
<dbReference type="BioCyc" id="FNUC190304:G1FZS-501-MONOMER"/>
<dbReference type="Proteomes" id="UP000002521">
    <property type="component" value="Chromosome"/>
</dbReference>
<dbReference type="GO" id="GO:0005737">
    <property type="term" value="C:cytoplasm"/>
    <property type="evidence" value="ECO:0007669"/>
    <property type="project" value="UniProtKB-SubCell"/>
</dbReference>
<dbReference type="GO" id="GO:0005524">
    <property type="term" value="F:ATP binding"/>
    <property type="evidence" value="ECO:0007669"/>
    <property type="project" value="UniProtKB-UniRule"/>
</dbReference>
<dbReference type="GO" id="GO:0016887">
    <property type="term" value="F:ATP hydrolysis activity"/>
    <property type="evidence" value="ECO:0007669"/>
    <property type="project" value="UniProtKB-UniRule"/>
</dbReference>
<dbReference type="GO" id="GO:0004176">
    <property type="term" value="F:ATP-dependent peptidase activity"/>
    <property type="evidence" value="ECO:0007669"/>
    <property type="project" value="UniProtKB-UniRule"/>
</dbReference>
<dbReference type="GO" id="GO:0043565">
    <property type="term" value="F:sequence-specific DNA binding"/>
    <property type="evidence" value="ECO:0007669"/>
    <property type="project" value="UniProtKB-UniRule"/>
</dbReference>
<dbReference type="GO" id="GO:0004252">
    <property type="term" value="F:serine-type endopeptidase activity"/>
    <property type="evidence" value="ECO:0007669"/>
    <property type="project" value="UniProtKB-UniRule"/>
</dbReference>
<dbReference type="GO" id="GO:0034605">
    <property type="term" value="P:cellular response to heat"/>
    <property type="evidence" value="ECO:0007669"/>
    <property type="project" value="UniProtKB-UniRule"/>
</dbReference>
<dbReference type="GO" id="GO:0006515">
    <property type="term" value="P:protein quality control for misfolded or incompletely synthesized proteins"/>
    <property type="evidence" value="ECO:0007669"/>
    <property type="project" value="UniProtKB-UniRule"/>
</dbReference>
<dbReference type="CDD" id="cd19500">
    <property type="entry name" value="RecA-like_Lon"/>
    <property type="match status" value="1"/>
</dbReference>
<dbReference type="FunFam" id="3.40.50.300:FF:000021">
    <property type="entry name" value="Lon protease homolog"/>
    <property type="match status" value="1"/>
</dbReference>
<dbReference type="Gene3D" id="1.10.8.60">
    <property type="match status" value="1"/>
</dbReference>
<dbReference type="Gene3D" id="1.20.5.5270">
    <property type="match status" value="1"/>
</dbReference>
<dbReference type="Gene3D" id="1.20.58.1480">
    <property type="match status" value="1"/>
</dbReference>
<dbReference type="Gene3D" id="3.30.230.10">
    <property type="match status" value="1"/>
</dbReference>
<dbReference type="Gene3D" id="2.30.130.40">
    <property type="entry name" value="LON domain-like"/>
    <property type="match status" value="1"/>
</dbReference>
<dbReference type="Gene3D" id="3.40.50.300">
    <property type="entry name" value="P-loop containing nucleotide triphosphate hydrolases"/>
    <property type="match status" value="1"/>
</dbReference>
<dbReference type="HAMAP" id="MF_01973">
    <property type="entry name" value="lon_bact"/>
    <property type="match status" value="1"/>
</dbReference>
<dbReference type="InterPro" id="IPR003593">
    <property type="entry name" value="AAA+_ATPase"/>
</dbReference>
<dbReference type="InterPro" id="IPR003959">
    <property type="entry name" value="ATPase_AAA_core"/>
</dbReference>
<dbReference type="InterPro" id="IPR027543">
    <property type="entry name" value="Lon_bac"/>
</dbReference>
<dbReference type="InterPro" id="IPR004815">
    <property type="entry name" value="Lon_bac/euk-typ"/>
</dbReference>
<dbReference type="InterPro" id="IPR054594">
    <property type="entry name" value="Lon_lid"/>
</dbReference>
<dbReference type="InterPro" id="IPR008269">
    <property type="entry name" value="Lon_proteolytic"/>
</dbReference>
<dbReference type="InterPro" id="IPR027065">
    <property type="entry name" value="Lon_Prtase"/>
</dbReference>
<dbReference type="InterPro" id="IPR003111">
    <property type="entry name" value="Lon_prtase_N"/>
</dbReference>
<dbReference type="InterPro" id="IPR046336">
    <property type="entry name" value="Lon_prtase_N_sf"/>
</dbReference>
<dbReference type="InterPro" id="IPR027417">
    <property type="entry name" value="P-loop_NTPase"/>
</dbReference>
<dbReference type="InterPro" id="IPR008268">
    <property type="entry name" value="Peptidase_S16_AS"/>
</dbReference>
<dbReference type="InterPro" id="IPR015947">
    <property type="entry name" value="PUA-like_sf"/>
</dbReference>
<dbReference type="InterPro" id="IPR020568">
    <property type="entry name" value="Ribosomal_Su5_D2-typ_SF"/>
</dbReference>
<dbReference type="InterPro" id="IPR014721">
    <property type="entry name" value="Ribsml_uS5_D2-typ_fold_subgr"/>
</dbReference>
<dbReference type="NCBIfam" id="TIGR00763">
    <property type="entry name" value="lon"/>
    <property type="match status" value="1"/>
</dbReference>
<dbReference type="PANTHER" id="PTHR10046">
    <property type="entry name" value="ATP DEPENDENT LON PROTEASE FAMILY MEMBER"/>
    <property type="match status" value="1"/>
</dbReference>
<dbReference type="Pfam" id="PF00004">
    <property type="entry name" value="AAA"/>
    <property type="match status" value="1"/>
</dbReference>
<dbReference type="Pfam" id="PF05362">
    <property type="entry name" value="Lon_C"/>
    <property type="match status" value="1"/>
</dbReference>
<dbReference type="Pfam" id="PF22667">
    <property type="entry name" value="Lon_lid"/>
    <property type="match status" value="1"/>
</dbReference>
<dbReference type="Pfam" id="PF02190">
    <property type="entry name" value="LON_substr_bdg"/>
    <property type="match status" value="1"/>
</dbReference>
<dbReference type="PIRSF" id="PIRSF001174">
    <property type="entry name" value="Lon_proteas"/>
    <property type="match status" value="1"/>
</dbReference>
<dbReference type="PRINTS" id="PR00830">
    <property type="entry name" value="ENDOLAPTASE"/>
</dbReference>
<dbReference type="SMART" id="SM00382">
    <property type="entry name" value="AAA"/>
    <property type="match status" value="1"/>
</dbReference>
<dbReference type="SMART" id="SM00464">
    <property type="entry name" value="LON"/>
    <property type="match status" value="1"/>
</dbReference>
<dbReference type="SUPFAM" id="SSF52540">
    <property type="entry name" value="P-loop containing nucleoside triphosphate hydrolases"/>
    <property type="match status" value="1"/>
</dbReference>
<dbReference type="SUPFAM" id="SSF88697">
    <property type="entry name" value="PUA domain-like"/>
    <property type="match status" value="1"/>
</dbReference>
<dbReference type="SUPFAM" id="SSF54211">
    <property type="entry name" value="Ribosomal protein S5 domain 2-like"/>
    <property type="match status" value="1"/>
</dbReference>
<dbReference type="PROSITE" id="PS51787">
    <property type="entry name" value="LON_N"/>
    <property type="match status" value="1"/>
</dbReference>
<dbReference type="PROSITE" id="PS51786">
    <property type="entry name" value="LON_PROTEOLYTIC"/>
    <property type="match status" value="1"/>
</dbReference>
<dbReference type="PROSITE" id="PS01046">
    <property type="entry name" value="LON_SER"/>
    <property type="match status" value="1"/>
</dbReference>
<reference key="1">
    <citation type="journal article" date="2002" name="J. Bacteriol.">
        <title>Genome sequence and analysis of the oral bacterium Fusobacterium nucleatum strain ATCC 25586.</title>
        <authorList>
            <person name="Kapatral V."/>
            <person name="Anderson I."/>
            <person name="Ivanova N."/>
            <person name="Reznik G."/>
            <person name="Los T."/>
            <person name="Lykidis A."/>
            <person name="Bhattacharyya A."/>
            <person name="Bartman A."/>
            <person name="Gardner W."/>
            <person name="Grechkin G."/>
            <person name="Zhu L."/>
            <person name="Vasieva O."/>
            <person name="Chu L."/>
            <person name="Kogan Y."/>
            <person name="Chaga O."/>
            <person name="Goltsman E."/>
            <person name="Bernal A."/>
            <person name="Larsen N."/>
            <person name="D'Souza M."/>
            <person name="Walunas T."/>
            <person name="Pusch G."/>
            <person name="Haselkorn R."/>
            <person name="Fonstein M."/>
            <person name="Kyrpides N.C."/>
            <person name="Overbeek R."/>
        </authorList>
    </citation>
    <scope>NUCLEOTIDE SEQUENCE [LARGE SCALE GENOMIC DNA]</scope>
    <source>
        <strain>ATCC 25586 / DSM 15643 / BCRC 10681 / CIP 101130 / JCM 8532 / KCTC 2640 / LMG 13131 / VPI 4355</strain>
    </source>
</reference>
<protein>
    <recommendedName>
        <fullName evidence="1">Lon protease</fullName>
        <ecNumber evidence="1">3.4.21.53</ecNumber>
    </recommendedName>
    <alternativeName>
        <fullName evidence="1">ATP-dependent protease La</fullName>
    </alternativeName>
</protein>
<proteinExistence type="inferred from homology"/>
<keyword id="KW-0067">ATP-binding</keyword>
<keyword id="KW-0963">Cytoplasm</keyword>
<keyword id="KW-0378">Hydrolase</keyword>
<keyword id="KW-0547">Nucleotide-binding</keyword>
<keyword id="KW-0645">Protease</keyword>
<keyword id="KW-1185">Reference proteome</keyword>
<keyword id="KW-0720">Serine protease</keyword>
<keyword id="KW-0346">Stress response</keyword>
<organism>
    <name type="scientific">Fusobacterium nucleatum subsp. nucleatum (strain ATCC 25586 / DSM 15643 / BCRC 10681 / CIP 101130 / JCM 8532 / KCTC 2640 / LMG 13131 / VPI 4355)</name>
    <dbReference type="NCBI Taxonomy" id="190304"/>
    <lineage>
        <taxon>Bacteria</taxon>
        <taxon>Fusobacteriati</taxon>
        <taxon>Fusobacteriota</taxon>
        <taxon>Fusobacteriia</taxon>
        <taxon>Fusobacteriales</taxon>
        <taxon>Fusobacteriaceae</taxon>
        <taxon>Fusobacterium</taxon>
    </lineage>
</organism>
<accession>Q8RHK0</accession>